<dbReference type="EMBL" id="AE014295">
    <property type="protein sequence ID" value="AAN25083.1"/>
    <property type="molecule type" value="Genomic_DNA"/>
</dbReference>
<dbReference type="RefSeq" id="NP_696447.1">
    <property type="nucleotide sequence ID" value="NC_004307.2"/>
</dbReference>
<dbReference type="RefSeq" id="WP_007053062.1">
    <property type="nucleotide sequence ID" value="NC_004307.2"/>
</dbReference>
<dbReference type="SMR" id="Q8G4U2"/>
<dbReference type="STRING" id="206672.BL1282"/>
<dbReference type="EnsemblBacteria" id="AAN25083">
    <property type="protein sequence ID" value="AAN25083"/>
    <property type="gene ID" value="BL1282"/>
</dbReference>
<dbReference type="GeneID" id="69578970"/>
<dbReference type="KEGG" id="blo:BL1282"/>
<dbReference type="PATRIC" id="fig|206672.9.peg.1569"/>
<dbReference type="HOGENOM" id="CLU_061463_3_0_11"/>
<dbReference type="OrthoDB" id="9813334at2"/>
<dbReference type="PhylomeDB" id="Q8G4U2"/>
<dbReference type="Proteomes" id="UP000000439">
    <property type="component" value="Chromosome"/>
</dbReference>
<dbReference type="GO" id="GO:0005737">
    <property type="term" value="C:cytoplasm"/>
    <property type="evidence" value="ECO:0007669"/>
    <property type="project" value="UniProtKB-ARBA"/>
</dbReference>
<dbReference type="GO" id="GO:1990904">
    <property type="term" value="C:ribonucleoprotein complex"/>
    <property type="evidence" value="ECO:0007669"/>
    <property type="project" value="UniProtKB-KW"/>
</dbReference>
<dbReference type="GO" id="GO:0005840">
    <property type="term" value="C:ribosome"/>
    <property type="evidence" value="ECO:0007669"/>
    <property type="project" value="UniProtKB-KW"/>
</dbReference>
<dbReference type="GO" id="GO:0019843">
    <property type="term" value="F:rRNA binding"/>
    <property type="evidence" value="ECO:0007669"/>
    <property type="project" value="UniProtKB-UniRule"/>
</dbReference>
<dbReference type="GO" id="GO:0003735">
    <property type="term" value="F:structural constituent of ribosome"/>
    <property type="evidence" value="ECO:0007669"/>
    <property type="project" value="InterPro"/>
</dbReference>
<dbReference type="GO" id="GO:0006412">
    <property type="term" value="P:translation"/>
    <property type="evidence" value="ECO:0007669"/>
    <property type="project" value="UniProtKB-UniRule"/>
</dbReference>
<dbReference type="HAMAP" id="MF_01363">
    <property type="entry name" value="Ribosomal_bL21"/>
    <property type="match status" value="1"/>
</dbReference>
<dbReference type="InterPro" id="IPR028909">
    <property type="entry name" value="bL21-like"/>
</dbReference>
<dbReference type="InterPro" id="IPR036164">
    <property type="entry name" value="bL21-like_sf"/>
</dbReference>
<dbReference type="InterPro" id="IPR001787">
    <property type="entry name" value="Ribosomal_bL21"/>
</dbReference>
<dbReference type="InterPro" id="IPR018258">
    <property type="entry name" value="Ribosomal_bL21_CS"/>
</dbReference>
<dbReference type="NCBIfam" id="TIGR00061">
    <property type="entry name" value="L21"/>
    <property type="match status" value="1"/>
</dbReference>
<dbReference type="PANTHER" id="PTHR21349">
    <property type="entry name" value="50S RIBOSOMAL PROTEIN L21"/>
    <property type="match status" value="1"/>
</dbReference>
<dbReference type="PANTHER" id="PTHR21349:SF0">
    <property type="entry name" value="LARGE RIBOSOMAL SUBUNIT PROTEIN BL21M"/>
    <property type="match status" value="1"/>
</dbReference>
<dbReference type="Pfam" id="PF00829">
    <property type="entry name" value="Ribosomal_L21p"/>
    <property type="match status" value="1"/>
</dbReference>
<dbReference type="SUPFAM" id="SSF141091">
    <property type="entry name" value="L21p-like"/>
    <property type="match status" value="1"/>
</dbReference>
<dbReference type="PROSITE" id="PS01169">
    <property type="entry name" value="RIBOSOMAL_L21"/>
    <property type="match status" value="1"/>
</dbReference>
<evidence type="ECO:0000255" key="1">
    <source>
        <dbReference type="HAMAP-Rule" id="MF_01363"/>
    </source>
</evidence>
<evidence type="ECO:0000305" key="2"/>
<name>RL21_BIFLO</name>
<comment type="function">
    <text evidence="1">This protein binds to 23S rRNA in the presence of protein L20.</text>
</comment>
<comment type="subunit">
    <text evidence="1">Part of the 50S ribosomal subunit. Contacts protein L20.</text>
</comment>
<comment type="similarity">
    <text evidence="1">Belongs to the bacterial ribosomal protein bL21 family.</text>
</comment>
<protein>
    <recommendedName>
        <fullName evidence="1">Large ribosomal subunit protein bL21</fullName>
    </recommendedName>
    <alternativeName>
        <fullName evidence="2">50S ribosomal protein L21</fullName>
    </alternativeName>
</protein>
<gene>
    <name evidence="1" type="primary">rplU</name>
    <name type="ordered locus">BL1282</name>
</gene>
<organism>
    <name type="scientific">Bifidobacterium longum (strain NCC 2705)</name>
    <dbReference type="NCBI Taxonomy" id="206672"/>
    <lineage>
        <taxon>Bacteria</taxon>
        <taxon>Bacillati</taxon>
        <taxon>Actinomycetota</taxon>
        <taxon>Actinomycetes</taxon>
        <taxon>Bifidobacteriales</taxon>
        <taxon>Bifidobacteriaceae</taxon>
        <taxon>Bifidobacterium</taxon>
    </lineage>
</organism>
<reference key="1">
    <citation type="journal article" date="2002" name="Proc. Natl. Acad. Sci. U.S.A.">
        <title>The genome sequence of Bifidobacterium longum reflects its adaptation to the human gastrointestinal tract.</title>
        <authorList>
            <person name="Schell M.A."/>
            <person name="Karmirantzou M."/>
            <person name="Snel B."/>
            <person name="Vilanova D."/>
            <person name="Berger B."/>
            <person name="Pessi G."/>
            <person name="Zwahlen M.-C."/>
            <person name="Desiere F."/>
            <person name="Bork P."/>
            <person name="Delley M."/>
            <person name="Pridmore R.D."/>
            <person name="Arigoni F."/>
        </authorList>
    </citation>
    <scope>NUCLEOTIDE SEQUENCE [LARGE SCALE GENOMIC DNA]</scope>
    <source>
        <strain>NCC 2705</strain>
    </source>
</reference>
<keyword id="KW-1185">Reference proteome</keyword>
<keyword id="KW-0687">Ribonucleoprotein</keyword>
<keyword id="KW-0689">Ribosomal protein</keyword>
<keyword id="KW-0694">RNA-binding</keyword>
<keyword id="KW-0699">rRNA-binding</keyword>
<accession>Q8G4U2</accession>
<sequence length="102" mass="10950">MYAIVKAGGHQEKVEVGDVILVNRLDAKKGDTVEFPVSLVVDGDKVTLAAADLAKVSVKAEVVNDEAKGPKISIQKYKNKTGVARRKGHRQKLTIVKITAIA</sequence>
<proteinExistence type="inferred from homology"/>
<feature type="chain" id="PRO_0000270640" description="Large ribosomal subunit protein bL21">
    <location>
        <begin position="1"/>
        <end position="102"/>
    </location>
</feature>